<dbReference type="EMBL" id="CP001398">
    <property type="protein sequence ID" value="ACS34470.1"/>
    <property type="molecule type" value="Genomic_DNA"/>
</dbReference>
<dbReference type="RefSeq" id="WP_015859574.1">
    <property type="nucleotide sequence ID" value="NC_012804.1"/>
</dbReference>
<dbReference type="SMR" id="C5A251"/>
<dbReference type="STRING" id="593117.TGAM_1968"/>
<dbReference type="PaxDb" id="593117-TGAM_1968"/>
<dbReference type="GeneID" id="27134597"/>
<dbReference type="GeneID" id="7987025"/>
<dbReference type="KEGG" id="tga:TGAM_1968"/>
<dbReference type="PATRIC" id="fig|593117.10.peg.1978"/>
<dbReference type="eggNOG" id="arCOG04239">
    <property type="taxonomic scope" value="Archaea"/>
</dbReference>
<dbReference type="HOGENOM" id="CLU_089738_1_1_2"/>
<dbReference type="OrthoDB" id="10429at2157"/>
<dbReference type="Proteomes" id="UP000001488">
    <property type="component" value="Chromosome"/>
</dbReference>
<dbReference type="GO" id="GO:0015935">
    <property type="term" value="C:small ribosomal subunit"/>
    <property type="evidence" value="ECO:0007669"/>
    <property type="project" value="InterPro"/>
</dbReference>
<dbReference type="GO" id="GO:0019843">
    <property type="term" value="F:rRNA binding"/>
    <property type="evidence" value="ECO:0007669"/>
    <property type="project" value="UniProtKB-UniRule"/>
</dbReference>
<dbReference type="GO" id="GO:0003735">
    <property type="term" value="F:structural constituent of ribosome"/>
    <property type="evidence" value="ECO:0007669"/>
    <property type="project" value="InterPro"/>
</dbReference>
<dbReference type="GO" id="GO:0042274">
    <property type="term" value="P:ribosomal small subunit biogenesis"/>
    <property type="evidence" value="ECO:0007669"/>
    <property type="project" value="TreeGrafter"/>
</dbReference>
<dbReference type="GO" id="GO:0006412">
    <property type="term" value="P:translation"/>
    <property type="evidence" value="ECO:0007669"/>
    <property type="project" value="UniProtKB-UniRule"/>
</dbReference>
<dbReference type="CDD" id="cd00165">
    <property type="entry name" value="S4"/>
    <property type="match status" value="1"/>
</dbReference>
<dbReference type="FunFam" id="3.10.290.10:FF:000026">
    <property type="entry name" value="30S ribosomal protein S4"/>
    <property type="match status" value="1"/>
</dbReference>
<dbReference type="Gene3D" id="3.10.290.10">
    <property type="entry name" value="RNA-binding S4 domain"/>
    <property type="match status" value="1"/>
</dbReference>
<dbReference type="HAMAP" id="MF_01306_A">
    <property type="entry name" value="Ribosomal_uS4_A"/>
    <property type="match status" value="1"/>
</dbReference>
<dbReference type="InterPro" id="IPR022801">
    <property type="entry name" value="Ribosomal_uS4"/>
</dbReference>
<dbReference type="InterPro" id="IPR022802">
    <property type="entry name" value="Ribosomal_uS4_arc"/>
</dbReference>
<dbReference type="InterPro" id="IPR018079">
    <property type="entry name" value="Ribosomal_uS4_CS"/>
</dbReference>
<dbReference type="InterPro" id="IPR005710">
    <property type="entry name" value="Ribosomal_uS4_euk/arc"/>
</dbReference>
<dbReference type="InterPro" id="IPR001912">
    <property type="entry name" value="Ribosomal_uS4_N"/>
</dbReference>
<dbReference type="InterPro" id="IPR002942">
    <property type="entry name" value="S4_RNA-bd"/>
</dbReference>
<dbReference type="InterPro" id="IPR036986">
    <property type="entry name" value="S4_RNA-bd_sf"/>
</dbReference>
<dbReference type="NCBIfam" id="NF003139">
    <property type="entry name" value="PRK04051.1"/>
    <property type="match status" value="1"/>
</dbReference>
<dbReference type="NCBIfam" id="TIGR01018">
    <property type="entry name" value="uS4_arch"/>
    <property type="match status" value="1"/>
</dbReference>
<dbReference type="PANTHER" id="PTHR11831">
    <property type="entry name" value="30S 40S RIBOSOMAL PROTEIN"/>
    <property type="match status" value="1"/>
</dbReference>
<dbReference type="PANTHER" id="PTHR11831:SF5">
    <property type="entry name" value="40S RIBOSOMAL PROTEIN S9"/>
    <property type="match status" value="1"/>
</dbReference>
<dbReference type="Pfam" id="PF00163">
    <property type="entry name" value="Ribosomal_S4"/>
    <property type="match status" value="1"/>
</dbReference>
<dbReference type="Pfam" id="PF01479">
    <property type="entry name" value="S4"/>
    <property type="match status" value="1"/>
</dbReference>
<dbReference type="SMART" id="SM01390">
    <property type="entry name" value="Ribosomal_S4"/>
    <property type="match status" value="1"/>
</dbReference>
<dbReference type="SMART" id="SM00363">
    <property type="entry name" value="S4"/>
    <property type="match status" value="1"/>
</dbReference>
<dbReference type="SUPFAM" id="SSF55174">
    <property type="entry name" value="Alpha-L RNA-binding motif"/>
    <property type="match status" value="1"/>
</dbReference>
<dbReference type="PROSITE" id="PS00632">
    <property type="entry name" value="RIBOSOMAL_S4"/>
    <property type="match status" value="1"/>
</dbReference>
<dbReference type="PROSITE" id="PS50889">
    <property type="entry name" value="S4"/>
    <property type="match status" value="1"/>
</dbReference>
<organism>
    <name type="scientific">Thermococcus gammatolerans (strain DSM 15229 / JCM 11827 / EJ3)</name>
    <dbReference type="NCBI Taxonomy" id="593117"/>
    <lineage>
        <taxon>Archaea</taxon>
        <taxon>Methanobacteriati</taxon>
        <taxon>Methanobacteriota</taxon>
        <taxon>Thermococci</taxon>
        <taxon>Thermococcales</taxon>
        <taxon>Thermococcaceae</taxon>
        <taxon>Thermococcus</taxon>
    </lineage>
</organism>
<protein>
    <recommendedName>
        <fullName evidence="1">Small ribosomal subunit protein uS4</fullName>
    </recommendedName>
    <alternativeName>
        <fullName evidence="2">30S ribosomal protein S4</fullName>
    </alternativeName>
</protein>
<sequence>MGDPKRQRKKYETPSHPWIKERLDRERVLKRKYALKNKKELWRHETQLKEFRRRARRLLAARGKQAEIERQQLLQRLHRLGLLPADAALDDVLSLTVEDVLERRLQTLVYKKGLARTIRQARQLIVHGHIEVNGQIIRSPGYLVLREEEDTITYAKNSPFAKESHPERMVIEQAKQGGEA</sequence>
<comment type="function">
    <text evidence="1">One of the primary rRNA binding proteins, it binds directly to 16S rRNA where it nucleates assembly of the body of the 30S subunit.</text>
</comment>
<comment type="function">
    <text evidence="1">With S5 and S12 plays an important role in translational accuracy.</text>
</comment>
<comment type="subunit">
    <text evidence="1">Part of the 30S ribosomal subunit. Contacts protein S5. The interaction surface between S4 and S5 is involved in control of translational fidelity.</text>
</comment>
<comment type="similarity">
    <text evidence="1">Belongs to the universal ribosomal protein uS4 family.</text>
</comment>
<evidence type="ECO:0000255" key="1">
    <source>
        <dbReference type="HAMAP-Rule" id="MF_01306"/>
    </source>
</evidence>
<evidence type="ECO:0000305" key="2"/>
<accession>C5A251</accession>
<feature type="chain" id="PRO_1000214310" description="Small ribosomal subunit protein uS4">
    <location>
        <begin position="1"/>
        <end position="180"/>
    </location>
</feature>
<feature type="domain" description="S4 RNA-binding" evidence="1">
    <location>
        <begin position="103"/>
        <end position="165"/>
    </location>
</feature>
<keyword id="KW-1185">Reference proteome</keyword>
<keyword id="KW-0687">Ribonucleoprotein</keyword>
<keyword id="KW-0689">Ribosomal protein</keyword>
<keyword id="KW-0694">RNA-binding</keyword>
<keyword id="KW-0699">rRNA-binding</keyword>
<reference key="1">
    <citation type="journal article" date="2007" name="Genome Biol.">
        <title>Genome analysis and genome-wide proteomics of Thermococcus gammatolerans, the most radioresistant organism known amongst the Archaea.</title>
        <authorList>
            <person name="Zivanovic Y."/>
            <person name="Armengaud J."/>
            <person name="Lagorce A."/>
            <person name="Leplat C."/>
            <person name="Guerin P."/>
            <person name="Dutertre M."/>
            <person name="Anthouard V."/>
            <person name="Forterre P."/>
            <person name="Wincker P."/>
            <person name="Confalonieri F."/>
        </authorList>
    </citation>
    <scope>NUCLEOTIDE SEQUENCE [LARGE SCALE GENOMIC DNA]</scope>
    <source>
        <strain>DSM 15229 / JCM 11827 / EJ3</strain>
    </source>
</reference>
<proteinExistence type="inferred from homology"/>
<gene>
    <name evidence="1" type="primary">rps4</name>
    <name type="ordered locus">TGAM_1968</name>
</gene>
<name>RS4_THEGJ</name>